<keyword id="KW-0119">Carbohydrate metabolism</keyword>
<keyword id="KW-0413">Isomerase</keyword>
<keyword id="KW-1185">Reference proteome</keyword>
<accession>Q57586</accession>
<feature type="chain" id="PRO_0000156103" description="Ribose 1,5-bisphosphate isomerase">
    <location>
        <begin position="1"/>
        <end position="308"/>
    </location>
</feature>
<feature type="active site" description="Proton acceptor" evidence="1">
    <location>
        <position position="129"/>
    </location>
</feature>
<feature type="active site" description="Proton donor" evidence="1">
    <location>
        <position position="198"/>
    </location>
</feature>
<feature type="binding site" evidence="1">
    <location>
        <begin position="24"/>
        <end position="27"/>
    </location>
    <ligand>
        <name>substrate</name>
    </ligand>
</feature>
<feature type="binding site" evidence="1">
    <location>
        <position position="67"/>
    </location>
    <ligand>
        <name>substrate</name>
    </ligand>
</feature>
<feature type="binding site" evidence="1">
    <location>
        <begin position="208"/>
        <end position="209"/>
    </location>
    <ligand>
        <name>substrate</name>
    </ligand>
</feature>
<feature type="binding site" evidence="1">
    <location>
        <position position="234"/>
    </location>
    <ligand>
        <name>substrate</name>
    </ligand>
</feature>
<gene>
    <name type="ordered locus">MJ0122</name>
</gene>
<organism>
    <name type="scientific">Methanocaldococcus jannaschii (strain ATCC 43067 / DSM 2661 / JAL-1 / JCM 10045 / NBRC 100440)</name>
    <name type="common">Methanococcus jannaschii</name>
    <dbReference type="NCBI Taxonomy" id="243232"/>
    <lineage>
        <taxon>Archaea</taxon>
        <taxon>Methanobacteriati</taxon>
        <taxon>Methanobacteriota</taxon>
        <taxon>Methanomada group</taxon>
        <taxon>Methanococci</taxon>
        <taxon>Methanococcales</taxon>
        <taxon>Methanocaldococcaceae</taxon>
        <taxon>Methanocaldococcus</taxon>
    </lineage>
</organism>
<sequence length="308" mass="34518">MVFKMSEMDIIKETYEKIKNMEIRGAGRIGRAAAKALKEYALKISHLNEEEFKNKMREAGNILISARPTAVSLPNVVKYVLKGLNEENPKERVIERADEFINSSLKAIENIGKFGANRIKDGDTILTHCNSEAAISVIKTAYDEGKDIKVFCTETRPRNQGYLTAKTLYDYGIDVTLIVDSAVRYFIKEIDIVVVGADAITANGCLVNKIGTSQIALIANESRVPFLTAAETYKFHPKTIVGELIEIEERSPEEVAVFEDKYKGIKIRNPAFDVTPAKYIDAIITEVGLIPPQGAWYIIEKYFGWLEK</sequence>
<comment type="function">
    <text evidence="1">Catalyzes the isomerization of ribose 1,5-bisphosphate (R15P) to ribulose 1,5-bisphosphate (RuBP), the CO(2) acceptor and substrate for RubisCO. Functions in an archaeal AMP degradation pathway, together with AMP phosphorylase and RubisCO.</text>
</comment>
<comment type="catalytic activity">
    <reaction evidence="1">
        <text>alpha-D-ribose 1,5-bisphosphate = D-ribulose 1,5-bisphosphate</text>
        <dbReference type="Rhea" id="RHEA:32243"/>
        <dbReference type="ChEBI" id="CHEBI:57870"/>
        <dbReference type="ChEBI" id="CHEBI:68688"/>
        <dbReference type="EC" id="5.3.1.29"/>
    </reaction>
</comment>
<comment type="miscellaneous">
    <text evidence="1">Reaction proceeds via a cis-phosphoenolate intermediate.</text>
</comment>
<comment type="similarity">
    <text evidence="1 2">Belongs to the eIF-2B alpha/beta/delta subunits family. R15P isomerase subfamily.</text>
</comment>
<name>R15PI_METJA</name>
<dbReference type="EC" id="5.3.1.29" evidence="1"/>
<dbReference type="EMBL" id="L77117">
    <property type="protein sequence ID" value="AAB98103.1"/>
    <property type="molecule type" value="Genomic_DNA"/>
</dbReference>
<dbReference type="PIR" id="B64315">
    <property type="entry name" value="B64315"/>
</dbReference>
<dbReference type="SMR" id="Q57586"/>
<dbReference type="FunCoup" id="Q57586">
    <property type="interactions" value="35"/>
</dbReference>
<dbReference type="STRING" id="243232.MJ_0122"/>
<dbReference type="PaxDb" id="243232-MJ_0122"/>
<dbReference type="EnsemblBacteria" id="AAB98103">
    <property type="protein sequence ID" value="AAB98103"/>
    <property type="gene ID" value="MJ_0122"/>
</dbReference>
<dbReference type="KEGG" id="mja:MJ_0122"/>
<dbReference type="eggNOG" id="arCOG01124">
    <property type="taxonomic scope" value="Archaea"/>
</dbReference>
<dbReference type="HOGENOM" id="CLU_016218_2_1_2"/>
<dbReference type="InParanoid" id="Q57586"/>
<dbReference type="PhylomeDB" id="Q57586"/>
<dbReference type="Proteomes" id="UP000000805">
    <property type="component" value="Chromosome"/>
</dbReference>
<dbReference type="GO" id="GO:0043917">
    <property type="term" value="F:ribose 1,5-bisphosphate isomerase activity"/>
    <property type="evidence" value="ECO:0007669"/>
    <property type="project" value="UniProtKB-UniRule"/>
</dbReference>
<dbReference type="GO" id="GO:0046523">
    <property type="term" value="F:S-methyl-5-thioribose-1-phosphate isomerase activity"/>
    <property type="evidence" value="ECO:0000318"/>
    <property type="project" value="GO_Central"/>
</dbReference>
<dbReference type="GO" id="GO:0019509">
    <property type="term" value="P:L-methionine salvage from methylthioadenosine"/>
    <property type="evidence" value="ECO:0000318"/>
    <property type="project" value="GO_Central"/>
</dbReference>
<dbReference type="GO" id="GO:0019323">
    <property type="term" value="P:pentose catabolic process"/>
    <property type="evidence" value="ECO:0007669"/>
    <property type="project" value="UniProtKB-UniRule"/>
</dbReference>
<dbReference type="FunFam" id="1.20.120.420:FF:000011">
    <property type="entry name" value="Ribose 1,5-bisphosphate isomerase"/>
    <property type="match status" value="1"/>
</dbReference>
<dbReference type="FunFam" id="3.40.50.10470:FF:000019">
    <property type="entry name" value="Ribose 1,5-bisphosphate isomerase"/>
    <property type="match status" value="1"/>
</dbReference>
<dbReference type="Gene3D" id="1.20.120.420">
    <property type="entry name" value="translation initiation factor eif-2b, domain 1"/>
    <property type="match status" value="1"/>
</dbReference>
<dbReference type="Gene3D" id="3.40.50.10470">
    <property type="entry name" value="Translation initiation factor eif-2b, domain 2"/>
    <property type="match status" value="1"/>
</dbReference>
<dbReference type="HAMAP" id="MF_02230">
    <property type="entry name" value="R15P_isomerase"/>
    <property type="match status" value="1"/>
</dbReference>
<dbReference type="InterPro" id="IPR000649">
    <property type="entry name" value="IF-2B-related"/>
</dbReference>
<dbReference type="InterPro" id="IPR042529">
    <property type="entry name" value="IF_2B-like_C"/>
</dbReference>
<dbReference type="InterPro" id="IPR011559">
    <property type="entry name" value="Initiation_fac_2B_a/b/d"/>
</dbReference>
<dbReference type="InterPro" id="IPR027363">
    <property type="entry name" value="M1Pi_N"/>
</dbReference>
<dbReference type="InterPro" id="IPR037171">
    <property type="entry name" value="NagB/RpiA_transferase-like"/>
</dbReference>
<dbReference type="InterPro" id="IPR005250">
    <property type="entry name" value="R15Pi"/>
</dbReference>
<dbReference type="NCBIfam" id="TIGR00524">
    <property type="entry name" value="eIF-2B_rel"/>
    <property type="match status" value="1"/>
</dbReference>
<dbReference type="NCBIfam" id="TIGR00511">
    <property type="entry name" value="ribulose_e2b2"/>
    <property type="match status" value="1"/>
</dbReference>
<dbReference type="PANTHER" id="PTHR43475">
    <property type="entry name" value="METHYLTHIORIBOSE-1-PHOSPHATE ISOMERASE"/>
    <property type="match status" value="1"/>
</dbReference>
<dbReference type="PANTHER" id="PTHR43475:SF2">
    <property type="entry name" value="RIBOSE 1,5-BISPHOSPHATE ISOMERASE"/>
    <property type="match status" value="1"/>
</dbReference>
<dbReference type="Pfam" id="PF01008">
    <property type="entry name" value="IF-2B"/>
    <property type="match status" value="1"/>
</dbReference>
<dbReference type="SUPFAM" id="SSF100950">
    <property type="entry name" value="NagB/RpiA/CoA transferase-like"/>
    <property type="match status" value="1"/>
</dbReference>
<reference key="1">
    <citation type="journal article" date="1996" name="Science">
        <title>Complete genome sequence of the methanogenic archaeon, Methanococcus jannaschii.</title>
        <authorList>
            <person name="Bult C.J."/>
            <person name="White O."/>
            <person name="Olsen G.J."/>
            <person name="Zhou L."/>
            <person name="Fleischmann R.D."/>
            <person name="Sutton G.G."/>
            <person name="Blake J.A."/>
            <person name="FitzGerald L.M."/>
            <person name="Clayton R.A."/>
            <person name="Gocayne J.D."/>
            <person name="Kerlavage A.R."/>
            <person name="Dougherty B.A."/>
            <person name="Tomb J.-F."/>
            <person name="Adams M.D."/>
            <person name="Reich C.I."/>
            <person name="Overbeek R."/>
            <person name="Kirkness E.F."/>
            <person name="Weinstock K.G."/>
            <person name="Merrick J.M."/>
            <person name="Glodek A."/>
            <person name="Scott J.L."/>
            <person name="Geoghagen N.S.M."/>
            <person name="Weidman J.F."/>
            <person name="Fuhrmann J.L."/>
            <person name="Nguyen D."/>
            <person name="Utterback T.R."/>
            <person name="Kelley J.M."/>
            <person name="Peterson J.D."/>
            <person name="Sadow P.W."/>
            <person name="Hanna M.C."/>
            <person name="Cotton M.D."/>
            <person name="Roberts K.M."/>
            <person name="Hurst M.A."/>
            <person name="Kaine B.P."/>
            <person name="Borodovsky M."/>
            <person name="Klenk H.-P."/>
            <person name="Fraser C.M."/>
            <person name="Smith H.O."/>
            <person name="Woese C.R."/>
            <person name="Venter J.C."/>
        </authorList>
    </citation>
    <scope>NUCLEOTIDE SEQUENCE [LARGE SCALE GENOMIC DNA]</scope>
    <source>
        <strain>ATCC 43067 / DSM 2661 / JAL-1 / JCM 10045 / NBRC 100440</strain>
    </source>
</reference>
<evidence type="ECO:0000255" key="1">
    <source>
        <dbReference type="HAMAP-Rule" id="MF_02230"/>
    </source>
</evidence>
<evidence type="ECO:0000305" key="2"/>
<protein>
    <recommendedName>
        <fullName evidence="1">Ribose 1,5-bisphosphate isomerase</fullName>
        <shortName evidence="1">R15P isomerase</shortName>
        <shortName evidence="1">R15Pi</shortName>
        <ecNumber evidence="1">5.3.1.29</ecNumber>
    </recommendedName>
    <alternativeName>
        <fullName evidence="1">Ribulose 1,5-bisphosphate synthase</fullName>
        <shortName evidence="1">RuBP synthase</shortName>
    </alternativeName>
</protein>
<proteinExistence type="inferred from homology"/>